<name>YIDE_ECOLI</name>
<keyword id="KW-1003">Cell membrane</keyword>
<keyword id="KW-0472">Membrane</keyword>
<keyword id="KW-1185">Reference proteome</keyword>
<keyword id="KW-0677">Repeat</keyword>
<keyword id="KW-0812">Transmembrane</keyword>
<keyword id="KW-1133">Transmembrane helix</keyword>
<keyword id="KW-0813">Transport</keyword>
<proteinExistence type="inferred from homology"/>
<comment type="subcellular location">
    <subcellularLocation>
        <location evidence="1">Cell membrane</location>
        <topology evidence="1">Multi-pass membrane protein</topology>
    </subcellularLocation>
</comment>
<comment type="similarity">
    <text evidence="1">Belongs to the AAE transporter (TC 2.A.81) family. YidE subfamily.</text>
</comment>
<comment type="sequence caution" evidence="2">
    <conflict type="erroneous initiation">
        <sequence resource="EMBL-CDS" id="AAA62037"/>
    </conflict>
    <text>Extended N-terminus.</text>
</comment>
<organism>
    <name type="scientific">Escherichia coli (strain K12)</name>
    <dbReference type="NCBI Taxonomy" id="83333"/>
    <lineage>
        <taxon>Bacteria</taxon>
        <taxon>Pseudomonadati</taxon>
        <taxon>Pseudomonadota</taxon>
        <taxon>Gammaproteobacteria</taxon>
        <taxon>Enterobacterales</taxon>
        <taxon>Enterobacteriaceae</taxon>
        <taxon>Escherichia</taxon>
    </lineage>
</organism>
<accession>P60872</accession>
<accession>P29211</accession>
<accession>P76732</accession>
<accession>Q2M7Z7</accession>
<accession>Q8X537</accession>
<gene>
    <name evidence="1" type="primary">yidE</name>
    <name type="synonym">yibE</name>
    <name type="ordered locus">b3685</name>
    <name type="ordered locus">JW3662</name>
</gene>
<protein>
    <recommendedName>
        <fullName evidence="1">Putative transport protein YidE</fullName>
    </recommendedName>
</protein>
<feature type="chain" id="PRO_0000208797" description="Putative transport protein YidE">
    <location>
        <begin position="1"/>
        <end position="553"/>
    </location>
</feature>
<feature type="transmembrane region" description="Helical" evidence="1">
    <location>
        <begin position="4"/>
        <end position="24"/>
    </location>
</feature>
<feature type="transmembrane region" description="Helical" evidence="1">
    <location>
        <begin position="28"/>
        <end position="48"/>
    </location>
</feature>
<feature type="transmembrane region" description="Helical" evidence="1">
    <location>
        <begin position="65"/>
        <end position="85"/>
    </location>
</feature>
<feature type="transmembrane region" description="Helical" evidence="1">
    <location>
        <begin position="95"/>
        <end position="115"/>
    </location>
</feature>
<feature type="transmembrane region" description="Helical" evidence="1">
    <location>
        <begin position="158"/>
        <end position="178"/>
    </location>
</feature>
<feature type="transmembrane region" description="Helical" evidence="1">
    <location>
        <begin position="371"/>
        <end position="391"/>
    </location>
</feature>
<feature type="transmembrane region" description="Helical" evidence="1">
    <location>
        <begin position="393"/>
        <end position="413"/>
    </location>
</feature>
<feature type="transmembrane region" description="Helical" evidence="1">
    <location>
        <begin position="439"/>
        <end position="459"/>
    </location>
</feature>
<feature type="transmembrane region" description="Helical" evidence="1">
    <location>
        <begin position="464"/>
        <end position="484"/>
    </location>
</feature>
<feature type="transmembrane region" description="Helical" evidence="1">
    <location>
        <begin position="493"/>
        <end position="513"/>
    </location>
</feature>
<feature type="transmembrane region" description="Helical" evidence="1">
    <location>
        <begin position="533"/>
        <end position="553"/>
    </location>
</feature>
<feature type="domain" description="RCK C-terminal 1" evidence="1">
    <location>
        <begin position="191"/>
        <end position="276"/>
    </location>
</feature>
<feature type="domain" description="RCK C-terminal 2" evidence="1">
    <location>
        <begin position="279"/>
        <end position="361"/>
    </location>
</feature>
<feature type="sequence conflict" description="In Ref. 4; AAA24426." evidence="2" ref="4">
    <original>FGDILNLVG</original>
    <variation>RTDRNAKLL</variation>
    <location>
        <begin position="339"/>
        <end position="347"/>
    </location>
</feature>
<evidence type="ECO:0000255" key="1">
    <source>
        <dbReference type="HAMAP-Rule" id="MF_01016"/>
    </source>
</evidence>
<evidence type="ECO:0000305" key="2"/>
<dbReference type="EMBL" id="L10328">
    <property type="protein sequence ID" value="AAA62037.1"/>
    <property type="status" value="ALT_INIT"/>
    <property type="molecule type" value="Genomic_DNA"/>
</dbReference>
<dbReference type="EMBL" id="U00096">
    <property type="protein sequence ID" value="AAC76708.2"/>
    <property type="molecule type" value="Genomic_DNA"/>
</dbReference>
<dbReference type="EMBL" id="AP009048">
    <property type="protein sequence ID" value="BAE77609.1"/>
    <property type="molecule type" value="Genomic_DNA"/>
</dbReference>
<dbReference type="EMBL" id="M94104">
    <property type="protein sequence ID" value="AAA24426.1"/>
    <property type="molecule type" value="Genomic_DNA"/>
</dbReference>
<dbReference type="PIR" id="F65170">
    <property type="entry name" value="F65170"/>
</dbReference>
<dbReference type="RefSeq" id="NP_418140.4">
    <property type="nucleotide sequence ID" value="NC_000913.3"/>
</dbReference>
<dbReference type="RefSeq" id="WP_001279752.1">
    <property type="nucleotide sequence ID" value="NZ_SSZK01000035.1"/>
</dbReference>
<dbReference type="SMR" id="P60872"/>
<dbReference type="BioGRID" id="4260808">
    <property type="interactions" value="166"/>
</dbReference>
<dbReference type="DIP" id="DIP-12444N"/>
<dbReference type="FunCoup" id="P60872">
    <property type="interactions" value="52"/>
</dbReference>
<dbReference type="IntAct" id="P60872">
    <property type="interactions" value="1"/>
</dbReference>
<dbReference type="STRING" id="511145.b3685"/>
<dbReference type="PaxDb" id="511145-b3685"/>
<dbReference type="EnsemblBacteria" id="AAC76708">
    <property type="protein sequence ID" value="AAC76708"/>
    <property type="gene ID" value="b3685"/>
</dbReference>
<dbReference type="GeneID" id="948193"/>
<dbReference type="KEGG" id="ecj:JW3662"/>
<dbReference type="KEGG" id="eco:b3685"/>
<dbReference type="KEGG" id="ecoc:C3026_19980"/>
<dbReference type="PATRIC" id="fig|511145.12.peg.3807"/>
<dbReference type="EchoBASE" id="EB1498"/>
<dbReference type="eggNOG" id="COG0569">
    <property type="taxonomic scope" value="Bacteria"/>
</dbReference>
<dbReference type="eggNOG" id="COG2985">
    <property type="taxonomic scope" value="Bacteria"/>
</dbReference>
<dbReference type="HOGENOM" id="CLU_035023_3_1_6"/>
<dbReference type="InParanoid" id="P60872"/>
<dbReference type="OMA" id="AMWLIRL"/>
<dbReference type="OrthoDB" id="5166626at2"/>
<dbReference type="PhylomeDB" id="P60872"/>
<dbReference type="BioCyc" id="EcoCyc:EG11536-MONOMER"/>
<dbReference type="PRO" id="PR:P60872"/>
<dbReference type="Proteomes" id="UP000000625">
    <property type="component" value="Chromosome"/>
</dbReference>
<dbReference type="GO" id="GO:0005886">
    <property type="term" value="C:plasma membrane"/>
    <property type="evidence" value="ECO:0000314"/>
    <property type="project" value="EcoCyc"/>
</dbReference>
<dbReference type="GO" id="GO:0008324">
    <property type="term" value="F:monoatomic cation transmembrane transporter activity"/>
    <property type="evidence" value="ECO:0007669"/>
    <property type="project" value="InterPro"/>
</dbReference>
<dbReference type="GO" id="GO:0006813">
    <property type="term" value="P:potassium ion transport"/>
    <property type="evidence" value="ECO:0007669"/>
    <property type="project" value="InterPro"/>
</dbReference>
<dbReference type="FunFam" id="3.30.70.1450:FF:000004">
    <property type="entry name" value="Putative transport protein YidE"/>
    <property type="match status" value="1"/>
</dbReference>
<dbReference type="Gene3D" id="3.30.70.1450">
    <property type="entry name" value="Regulator of K+ conductance, C-terminal domain"/>
    <property type="match status" value="2"/>
</dbReference>
<dbReference type="HAMAP" id="MF_01016">
    <property type="entry name" value="YidE"/>
    <property type="match status" value="1"/>
</dbReference>
<dbReference type="InterPro" id="IPR050144">
    <property type="entry name" value="AAE_transporter"/>
</dbReference>
<dbReference type="InterPro" id="IPR006037">
    <property type="entry name" value="RCK_C"/>
</dbReference>
<dbReference type="InterPro" id="IPR036721">
    <property type="entry name" value="RCK_C_sf"/>
</dbReference>
<dbReference type="InterPro" id="IPR023018">
    <property type="entry name" value="Transpt_YidE_put"/>
</dbReference>
<dbReference type="InterPro" id="IPR006512">
    <property type="entry name" value="YidE_YbjL"/>
</dbReference>
<dbReference type="NCBIfam" id="NF003007">
    <property type="entry name" value="PRK03818.1"/>
    <property type="match status" value="1"/>
</dbReference>
<dbReference type="NCBIfam" id="TIGR01625">
    <property type="entry name" value="YidE_YbjL_dupl"/>
    <property type="match status" value="2"/>
</dbReference>
<dbReference type="PANTHER" id="PTHR30445">
    <property type="entry name" value="K(+)_H(+) ANTIPORTER SUBUNIT KHTT"/>
    <property type="match status" value="1"/>
</dbReference>
<dbReference type="PANTHER" id="PTHR30445:SF3">
    <property type="entry name" value="TRANSPORT PROTEIN YIDE-RELATED"/>
    <property type="match status" value="1"/>
</dbReference>
<dbReference type="Pfam" id="PF06826">
    <property type="entry name" value="Asp-Al_Ex"/>
    <property type="match status" value="2"/>
</dbReference>
<dbReference type="Pfam" id="PF02080">
    <property type="entry name" value="TrkA_C"/>
    <property type="match status" value="2"/>
</dbReference>
<dbReference type="SUPFAM" id="SSF116726">
    <property type="entry name" value="TrkA C-terminal domain-like"/>
    <property type="match status" value="2"/>
</dbReference>
<dbReference type="PROSITE" id="PS51202">
    <property type="entry name" value="RCK_C"/>
    <property type="match status" value="2"/>
</dbReference>
<reference key="1">
    <citation type="journal article" date="1993" name="Genomics">
        <title>DNA sequence and analysis of 136 kilobases of the Escherichia coli genome: organizational symmetry around the origin of replication.</title>
        <authorList>
            <person name="Burland V.D."/>
            <person name="Plunkett G. III"/>
            <person name="Daniels D.L."/>
            <person name="Blattner F.R."/>
        </authorList>
    </citation>
    <scope>NUCLEOTIDE SEQUENCE [LARGE SCALE GENOMIC DNA]</scope>
    <source>
        <strain>K12 / MG1655 / ATCC 47076</strain>
    </source>
</reference>
<reference key="2">
    <citation type="journal article" date="1997" name="Science">
        <title>The complete genome sequence of Escherichia coli K-12.</title>
        <authorList>
            <person name="Blattner F.R."/>
            <person name="Plunkett G. III"/>
            <person name="Bloch C.A."/>
            <person name="Perna N.T."/>
            <person name="Burland V."/>
            <person name="Riley M."/>
            <person name="Collado-Vides J."/>
            <person name="Glasner J.D."/>
            <person name="Rode C.K."/>
            <person name="Mayhew G.F."/>
            <person name="Gregor J."/>
            <person name="Davis N.W."/>
            <person name="Kirkpatrick H.A."/>
            <person name="Goeden M.A."/>
            <person name="Rose D.J."/>
            <person name="Mau B."/>
            <person name="Shao Y."/>
        </authorList>
    </citation>
    <scope>NUCLEOTIDE SEQUENCE [LARGE SCALE GENOMIC DNA]</scope>
    <source>
        <strain>K12 / MG1655 / ATCC 47076</strain>
    </source>
</reference>
<reference key="3">
    <citation type="journal article" date="2006" name="Mol. Syst. Biol.">
        <title>Highly accurate genome sequences of Escherichia coli K-12 strains MG1655 and W3110.</title>
        <authorList>
            <person name="Hayashi K."/>
            <person name="Morooka N."/>
            <person name="Yamamoto Y."/>
            <person name="Fujita K."/>
            <person name="Isono K."/>
            <person name="Choi S."/>
            <person name="Ohtsubo E."/>
            <person name="Baba T."/>
            <person name="Wanner B.L."/>
            <person name="Mori H."/>
            <person name="Horiuchi T."/>
        </authorList>
    </citation>
    <scope>NUCLEOTIDE SEQUENCE [LARGE SCALE GENOMIC DNA]</scope>
    <source>
        <strain>K12 / W3110 / ATCC 27325 / DSM 5911</strain>
    </source>
</reference>
<reference key="4">
    <citation type="journal article" date="1992" name="J. Bacteriol.">
        <title>Two novel heat shock genes encoding proteins produced in response to heterologous protein expression in Escherichia coli.</title>
        <authorList>
            <person name="Allen S.P."/>
            <person name="Polazzi J.O."/>
            <person name="Gierse J."/>
            <person name="Easton A.M."/>
        </authorList>
    </citation>
    <scope>NUCLEOTIDE SEQUENCE [GENOMIC DNA] OF 1-347</scope>
    <source>
        <strain>K12 / W3110 / ATCC 27325 / DSM 5911</strain>
    </source>
</reference>
<sequence length="553" mass="58939">MSDIALTVSILALVAVVGLFIGNVKFRGIGLGIGGVLFGGIIVGHFVSQAGMTLSSDMLHVIQEFGLILFVYTIGIQVGPGFFASLRVSGLRLNLFAVLIVIIGGLVTAILHKLFDIPLPVVLGIFSGAVTNTPALGAGQQILRDLGTPMEMVDQMGMSYAMAYPFGICGILFTMWMLRVIFRVNVETEAQQHESSRTNGGALIKTINIRVENPNLHDLAIKDVPILNGDKIICSRLKREETLKVPSPDTIIQLGDLLHLVGQPADLHNAQLVIGQEVDTSLSTKGTDLRVERVVVTNENVLGKRIRDLHFKERYDVVISRLNRAGVELVASGDISLQFGDILNLVGRPSAIDAVANVLGNAQQKLQQVQMLPVFIGIGLGVLLGSIPVFVPGFPAALKLGLAGGPLIMALILGRIGSIGKLYWFMPPSANLALRELGIVLFLSVVGLKSGGDFVNTLVNGEGLSWIGYGALITAVPLITVGILARMLAKMNYLTMCGMLAGSMTDPPALAFANNLHPTSGAAALSYATVYPLVMFLRIITPQLLAVLFWSIG</sequence>